<sequence>MNIHEYQAKALLGEFGVPISKGVPVLKAADAEAAAKALPGPVYVVKSQIHAGGRGKGKFKEASAGDKGGVRIAKSAAEVSEFAKQMLGATLVTIQTGPAGKQVNRLYIEDGSDIDKEFYLSLLVDRETSRVSFVVSTEGGVNIEDVAHNTPEKIVTFSVDPATGIMGHHGRTVANALKLSGDLAKQAEKLTAQLYAAFVAKDMSMLEINPLVVTKQGQLRVLDAKVSFDDNALFRHPEVLALRDETEEDAKEIEASKYDLNYVTLDGNIGCMVNGAGLAMATMDIIKLYGMAPANFLDVGGSASKEKVAAAFKIITADPNVKGILVNIFGGIMKCDVIAEGVTAAVREVGLSVPLVVRLEGTNVELGKKIILESGLNVVPADNLDDAAQKIVKAVKGG</sequence>
<reference key="1">
    <citation type="journal article" date="2002" name="DNA Res.">
        <title>Complete genomic sequence of nitrogen-fixing symbiotic bacterium Bradyrhizobium japonicum USDA110.</title>
        <authorList>
            <person name="Kaneko T."/>
            <person name="Nakamura Y."/>
            <person name="Sato S."/>
            <person name="Minamisawa K."/>
            <person name="Uchiumi T."/>
            <person name="Sasamoto S."/>
            <person name="Watanabe A."/>
            <person name="Idesawa K."/>
            <person name="Iriguchi M."/>
            <person name="Kawashima K."/>
            <person name="Kohara M."/>
            <person name="Matsumoto M."/>
            <person name="Shimpo S."/>
            <person name="Tsuruoka H."/>
            <person name="Wada T."/>
            <person name="Yamada M."/>
            <person name="Tabata S."/>
        </authorList>
    </citation>
    <scope>NUCLEOTIDE SEQUENCE [LARGE SCALE GENOMIC DNA]</scope>
    <source>
        <strain>JCM 10833 / BCRC 13528 / IAM 13628 / NBRC 14792 / USDA 110</strain>
    </source>
</reference>
<protein>
    <recommendedName>
        <fullName evidence="1">Succinate--CoA ligase [ADP-forming] subunit beta</fullName>
        <ecNumber evidence="1">6.2.1.5</ecNumber>
    </recommendedName>
    <alternativeName>
        <fullName evidence="1">Succinyl-CoA synthetase subunit beta</fullName>
        <shortName evidence="1">SCS-beta</shortName>
    </alternativeName>
</protein>
<keyword id="KW-0067">ATP-binding</keyword>
<keyword id="KW-0436">Ligase</keyword>
<keyword id="KW-0460">Magnesium</keyword>
<keyword id="KW-0479">Metal-binding</keyword>
<keyword id="KW-0547">Nucleotide-binding</keyword>
<keyword id="KW-1185">Reference proteome</keyword>
<keyword id="KW-0816">Tricarboxylic acid cycle</keyword>
<evidence type="ECO:0000255" key="1">
    <source>
        <dbReference type="HAMAP-Rule" id="MF_00558"/>
    </source>
</evidence>
<accession>Q89X60</accession>
<gene>
    <name evidence="1" type="primary">sucC</name>
    <name type="ordered locus">bll0455</name>
</gene>
<organism>
    <name type="scientific">Bradyrhizobium diazoefficiens (strain JCM 10833 / BCRC 13528 / IAM 13628 / NBRC 14792 / USDA 110)</name>
    <dbReference type="NCBI Taxonomy" id="224911"/>
    <lineage>
        <taxon>Bacteria</taxon>
        <taxon>Pseudomonadati</taxon>
        <taxon>Pseudomonadota</taxon>
        <taxon>Alphaproteobacteria</taxon>
        <taxon>Hyphomicrobiales</taxon>
        <taxon>Nitrobacteraceae</taxon>
        <taxon>Bradyrhizobium</taxon>
    </lineage>
</organism>
<dbReference type="EC" id="6.2.1.5" evidence="1"/>
<dbReference type="EMBL" id="BA000040">
    <property type="protein sequence ID" value="BAC45720.1"/>
    <property type="molecule type" value="Genomic_DNA"/>
</dbReference>
<dbReference type="RefSeq" id="NP_767095.1">
    <property type="nucleotide sequence ID" value="NC_004463.1"/>
</dbReference>
<dbReference type="RefSeq" id="WP_011083287.1">
    <property type="nucleotide sequence ID" value="NC_004463.1"/>
</dbReference>
<dbReference type="SMR" id="Q89X60"/>
<dbReference type="FunCoup" id="Q89X60">
    <property type="interactions" value="721"/>
</dbReference>
<dbReference type="STRING" id="224911.AAV28_41525"/>
<dbReference type="EnsemblBacteria" id="BAC45720">
    <property type="protein sequence ID" value="BAC45720"/>
    <property type="gene ID" value="BAC45720"/>
</dbReference>
<dbReference type="GeneID" id="46495601"/>
<dbReference type="KEGG" id="bja:bll0455"/>
<dbReference type="PATRIC" id="fig|224911.44.peg.8986"/>
<dbReference type="eggNOG" id="COG0045">
    <property type="taxonomic scope" value="Bacteria"/>
</dbReference>
<dbReference type="HOGENOM" id="CLU_037430_0_2_5"/>
<dbReference type="InParanoid" id="Q89X60"/>
<dbReference type="OrthoDB" id="9802602at2"/>
<dbReference type="PhylomeDB" id="Q89X60"/>
<dbReference type="UniPathway" id="UPA00223">
    <property type="reaction ID" value="UER00999"/>
</dbReference>
<dbReference type="Proteomes" id="UP000002526">
    <property type="component" value="Chromosome"/>
</dbReference>
<dbReference type="GO" id="GO:0005829">
    <property type="term" value="C:cytosol"/>
    <property type="evidence" value="ECO:0000318"/>
    <property type="project" value="GO_Central"/>
</dbReference>
<dbReference type="GO" id="GO:0042709">
    <property type="term" value="C:succinate-CoA ligase complex"/>
    <property type="evidence" value="ECO:0000318"/>
    <property type="project" value="GO_Central"/>
</dbReference>
<dbReference type="GO" id="GO:0005524">
    <property type="term" value="F:ATP binding"/>
    <property type="evidence" value="ECO:0007669"/>
    <property type="project" value="UniProtKB-UniRule"/>
</dbReference>
<dbReference type="GO" id="GO:0000287">
    <property type="term" value="F:magnesium ion binding"/>
    <property type="evidence" value="ECO:0007669"/>
    <property type="project" value="UniProtKB-UniRule"/>
</dbReference>
<dbReference type="GO" id="GO:0004775">
    <property type="term" value="F:succinate-CoA ligase (ADP-forming) activity"/>
    <property type="evidence" value="ECO:0000318"/>
    <property type="project" value="GO_Central"/>
</dbReference>
<dbReference type="GO" id="GO:0004776">
    <property type="term" value="F:succinate-CoA ligase (GDP-forming) activity"/>
    <property type="evidence" value="ECO:0007669"/>
    <property type="project" value="RHEA"/>
</dbReference>
<dbReference type="GO" id="GO:0006104">
    <property type="term" value="P:succinyl-CoA metabolic process"/>
    <property type="evidence" value="ECO:0000318"/>
    <property type="project" value="GO_Central"/>
</dbReference>
<dbReference type="GO" id="GO:0006099">
    <property type="term" value="P:tricarboxylic acid cycle"/>
    <property type="evidence" value="ECO:0000318"/>
    <property type="project" value="GO_Central"/>
</dbReference>
<dbReference type="FunFam" id="3.30.1490.20:FF:000002">
    <property type="entry name" value="Succinate--CoA ligase [ADP-forming] subunit beta"/>
    <property type="match status" value="1"/>
</dbReference>
<dbReference type="FunFam" id="3.30.470.20:FF:000002">
    <property type="entry name" value="Succinate--CoA ligase [ADP-forming] subunit beta"/>
    <property type="match status" value="1"/>
</dbReference>
<dbReference type="FunFam" id="3.40.50.261:FF:000001">
    <property type="entry name" value="Succinate--CoA ligase [ADP-forming] subunit beta"/>
    <property type="match status" value="1"/>
</dbReference>
<dbReference type="Gene3D" id="3.30.1490.20">
    <property type="entry name" value="ATP-grasp fold, A domain"/>
    <property type="match status" value="1"/>
</dbReference>
<dbReference type="Gene3D" id="3.30.470.20">
    <property type="entry name" value="ATP-grasp fold, B domain"/>
    <property type="match status" value="1"/>
</dbReference>
<dbReference type="Gene3D" id="3.40.50.261">
    <property type="entry name" value="Succinyl-CoA synthetase domains"/>
    <property type="match status" value="1"/>
</dbReference>
<dbReference type="HAMAP" id="MF_00558">
    <property type="entry name" value="Succ_CoA_beta"/>
    <property type="match status" value="1"/>
</dbReference>
<dbReference type="InterPro" id="IPR011761">
    <property type="entry name" value="ATP-grasp"/>
</dbReference>
<dbReference type="InterPro" id="IPR013650">
    <property type="entry name" value="ATP-grasp_succ-CoA_synth-type"/>
</dbReference>
<dbReference type="InterPro" id="IPR013815">
    <property type="entry name" value="ATP_grasp_subdomain_1"/>
</dbReference>
<dbReference type="InterPro" id="IPR005811">
    <property type="entry name" value="SUCC_ACL_C"/>
</dbReference>
<dbReference type="InterPro" id="IPR005809">
    <property type="entry name" value="Succ_CoA_ligase-like_bsu"/>
</dbReference>
<dbReference type="InterPro" id="IPR016102">
    <property type="entry name" value="Succinyl-CoA_synth-like"/>
</dbReference>
<dbReference type="NCBIfam" id="NF001913">
    <property type="entry name" value="PRK00696.1"/>
    <property type="match status" value="1"/>
</dbReference>
<dbReference type="NCBIfam" id="TIGR01016">
    <property type="entry name" value="sucCoAbeta"/>
    <property type="match status" value="1"/>
</dbReference>
<dbReference type="PANTHER" id="PTHR11815:SF10">
    <property type="entry name" value="SUCCINATE--COA LIGASE [GDP-FORMING] SUBUNIT BETA, MITOCHONDRIAL"/>
    <property type="match status" value="1"/>
</dbReference>
<dbReference type="PANTHER" id="PTHR11815">
    <property type="entry name" value="SUCCINYL-COA SYNTHETASE BETA CHAIN"/>
    <property type="match status" value="1"/>
</dbReference>
<dbReference type="Pfam" id="PF08442">
    <property type="entry name" value="ATP-grasp_2"/>
    <property type="match status" value="1"/>
</dbReference>
<dbReference type="Pfam" id="PF00549">
    <property type="entry name" value="Ligase_CoA"/>
    <property type="match status" value="1"/>
</dbReference>
<dbReference type="PIRSF" id="PIRSF001554">
    <property type="entry name" value="SucCS_beta"/>
    <property type="match status" value="1"/>
</dbReference>
<dbReference type="SUPFAM" id="SSF56059">
    <property type="entry name" value="Glutathione synthetase ATP-binding domain-like"/>
    <property type="match status" value="1"/>
</dbReference>
<dbReference type="SUPFAM" id="SSF52210">
    <property type="entry name" value="Succinyl-CoA synthetase domains"/>
    <property type="match status" value="1"/>
</dbReference>
<dbReference type="PROSITE" id="PS50975">
    <property type="entry name" value="ATP_GRASP"/>
    <property type="match status" value="1"/>
</dbReference>
<proteinExistence type="inferred from homology"/>
<name>SUCC_BRADU</name>
<comment type="function">
    <text evidence="1">Succinyl-CoA synthetase functions in the citric acid cycle (TCA), coupling the hydrolysis of succinyl-CoA to the synthesis of either ATP or GTP and thus represents the only step of substrate-level phosphorylation in the TCA. The beta subunit provides nucleotide specificity of the enzyme and binds the substrate succinate, while the binding sites for coenzyme A and phosphate are found in the alpha subunit.</text>
</comment>
<comment type="catalytic activity">
    <reaction evidence="1">
        <text>succinate + ATP + CoA = succinyl-CoA + ADP + phosphate</text>
        <dbReference type="Rhea" id="RHEA:17661"/>
        <dbReference type="ChEBI" id="CHEBI:30031"/>
        <dbReference type="ChEBI" id="CHEBI:30616"/>
        <dbReference type="ChEBI" id="CHEBI:43474"/>
        <dbReference type="ChEBI" id="CHEBI:57287"/>
        <dbReference type="ChEBI" id="CHEBI:57292"/>
        <dbReference type="ChEBI" id="CHEBI:456216"/>
        <dbReference type="EC" id="6.2.1.5"/>
    </reaction>
    <physiologicalReaction direction="right-to-left" evidence="1">
        <dbReference type="Rhea" id="RHEA:17663"/>
    </physiologicalReaction>
</comment>
<comment type="catalytic activity">
    <reaction evidence="1">
        <text>GTP + succinate + CoA = succinyl-CoA + GDP + phosphate</text>
        <dbReference type="Rhea" id="RHEA:22120"/>
        <dbReference type="ChEBI" id="CHEBI:30031"/>
        <dbReference type="ChEBI" id="CHEBI:37565"/>
        <dbReference type="ChEBI" id="CHEBI:43474"/>
        <dbReference type="ChEBI" id="CHEBI:57287"/>
        <dbReference type="ChEBI" id="CHEBI:57292"/>
        <dbReference type="ChEBI" id="CHEBI:58189"/>
    </reaction>
    <physiologicalReaction direction="right-to-left" evidence="1">
        <dbReference type="Rhea" id="RHEA:22122"/>
    </physiologicalReaction>
</comment>
<comment type="cofactor">
    <cofactor evidence="1">
        <name>Mg(2+)</name>
        <dbReference type="ChEBI" id="CHEBI:18420"/>
    </cofactor>
    <text evidence="1">Binds 1 Mg(2+) ion per subunit.</text>
</comment>
<comment type="pathway">
    <text evidence="1">Carbohydrate metabolism; tricarboxylic acid cycle; succinate from succinyl-CoA (ligase route): step 1/1.</text>
</comment>
<comment type="subunit">
    <text evidence="1">Heterotetramer of two alpha and two beta subunits.</text>
</comment>
<comment type="similarity">
    <text evidence="1">Belongs to the succinate/malate CoA ligase beta subunit family.</text>
</comment>
<feature type="chain" id="PRO_1000082028" description="Succinate--CoA ligase [ADP-forming] subunit beta">
    <location>
        <begin position="1"/>
        <end position="398"/>
    </location>
</feature>
<feature type="domain" description="ATP-grasp" evidence="1">
    <location>
        <begin position="9"/>
        <end position="254"/>
    </location>
</feature>
<feature type="binding site" evidence="1">
    <location>
        <position position="46"/>
    </location>
    <ligand>
        <name>ATP</name>
        <dbReference type="ChEBI" id="CHEBI:30616"/>
    </ligand>
</feature>
<feature type="binding site" evidence="1">
    <location>
        <begin position="53"/>
        <end position="55"/>
    </location>
    <ligand>
        <name>ATP</name>
        <dbReference type="ChEBI" id="CHEBI:30616"/>
    </ligand>
</feature>
<feature type="binding site" evidence="1">
    <location>
        <position position="109"/>
    </location>
    <ligand>
        <name>ATP</name>
        <dbReference type="ChEBI" id="CHEBI:30616"/>
    </ligand>
</feature>
<feature type="binding site" evidence="1">
    <location>
        <position position="112"/>
    </location>
    <ligand>
        <name>ATP</name>
        <dbReference type="ChEBI" id="CHEBI:30616"/>
    </ligand>
</feature>
<feature type="binding site" evidence="1">
    <location>
        <position position="117"/>
    </location>
    <ligand>
        <name>ATP</name>
        <dbReference type="ChEBI" id="CHEBI:30616"/>
    </ligand>
</feature>
<feature type="binding site" evidence="1">
    <location>
        <position position="209"/>
    </location>
    <ligand>
        <name>Mg(2+)</name>
        <dbReference type="ChEBI" id="CHEBI:18420"/>
    </ligand>
</feature>
<feature type="binding site" evidence="1">
    <location>
        <position position="223"/>
    </location>
    <ligand>
        <name>Mg(2+)</name>
        <dbReference type="ChEBI" id="CHEBI:18420"/>
    </ligand>
</feature>
<feature type="binding site" evidence="1">
    <location>
        <position position="274"/>
    </location>
    <ligand>
        <name>substrate</name>
        <note>ligand shared with subunit alpha</note>
    </ligand>
</feature>
<feature type="binding site" evidence="1">
    <location>
        <begin position="331"/>
        <end position="333"/>
    </location>
    <ligand>
        <name>substrate</name>
        <note>ligand shared with subunit alpha</note>
    </ligand>
</feature>